<reference key="1">
    <citation type="submission" date="2002-12" db="EMBL/GenBank/DDBJ databases">
        <title>Complete genome sequence of Vibrio vulnificus CMCP6.</title>
        <authorList>
            <person name="Rhee J.H."/>
            <person name="Kim S.Y."/>
            <person name="Chung S.S."/>
            <person name="Kim J.J."/>
            <person name="Moon Y.H."/>
            <person name="Jeong H."/>
            <person name="Choy H.E."/>
        </authorList>
    </citation>
    <scope>NUCLEOTIDE SEQUENCE [LARGE SCALE GENOMIC DNA]</scope>
    <source>
        <strain>CMCP6</strain>
    </source>
</reference>
<dbReference type="EMBL" id="AE016795">
    <property type="protein sequence ID" value="AAO09688.1"/>
    <property type="molecule type" value="Genomic_DNA"/>
</dbReference>
<dbReference type="RefSeq" id="WP_000462885.1">
    <property type="nucleotide sequence ID" value="NC_004459.3"/>
</dbReference>
<dbReference type="SMR" id="P64129"/>
<dbReference type="GeneID" id="97171130"/>
<dbReference type="KEGG" id="vvu:VV1_1231"/>
<dbReference type="HOGENOM" id="CLU_158040_3_0_6"/>
<dbReference type="Proteomes" id="UP000002275">
    <property type="component" value="Chromosome 1"/>
</dbReference>
<dbReference type="GO" id="GO:0003700">
    <property type="term" value="F:DNA-binding transcription factor activity"/>
    <property type="evidence" value="ECO:0007669"/>
    <property type="project" value="UniProtKB-UniRule"/>
</dbReference>
<dbReference type="GO" id="GO:0043565">
    <property type="term" value="F:sequence-specific DNA binding"/>
    <property type="evidence" value="ECO:0007669"/>
    <property type="project" value="InterPro"/>
</dbReference>
<dbReference type="FunFam" id="1.10.10.60:FF:000006">
    <property type="entry name" value="DNA-binding protein Fis"/>
    <property type="match status" value="1"/>
</dbReference>
<dbReference type="Gene3D" id="1.10.10.60">
    <property type="entry name" value="Homeodomain-like"/>
    <property type="match status" value="1"/>
</dbReference>
<dbReference type="HAMAP" id="MF_00166">
    <property type="entry name" value="DNA_binding_Fis"/>
    <property type="match status" value="1"/>
</dbReference>
<dbReference type="InterPro" id="IPR005412">
    <property type="entry name" value="Fis_DNA-bd"/>
</dbReference>
<dbReference type="InterPro" id="IPR009057">
    <property type="entry name" value="Homeodomain-like_sf"/>
</dbReference>
<dbReference type="InterPro" id="IPR002197">
    <property type="entry name" value="HTH_Fis"/>
</dbReference>
<dbReference type="InterPro" id="IPR050207">
    <property type="entry name" value="Trans_regulatory_Fis"/>
</dbReference>
<dbReference type="NCBIfam" id="NF001659">
    <property type="entry name" value="PRK00430.1"/>
    <property type="match status" value="1"/>
</dbReference>
<dbReference type="PANTHER" id="PTHR47918">
    <property type="entry name" value="DNA-BINDING PROTEIN FIS"/>
    <property type="match status" value="1"/>
</dbReference>
<dbReference type="PANTHER" id="PTHR47918:SF1">
    <property type="entry name" value="DNA-BINDING PROTEIN FIS"/>
    <property type="match status" value="1"/>
</dbReference>
<dbReference type="Pfam" id="PF02954">
    <property type="entry name" value="HTH_8"/>
    <property type="match status" value="1"/>
</dbReference>
<dbReference type="PIRSF" id="PIRSF002097">
    <property type="entry name" value="DNA-binding_Fis"/>
    <property type="match status" value="1"/>
</dbReference>
<dbReference type="PRINTS" id="PR01591">
    <property type="entry name" value="DNABINDNGFIS"/>
</dbReference>
<dbReference type="PRINTS" id="PR01590">
    <property type="entry name" value="HTHFIS"/>
</dbReference>
<dbReference type="SUPFAM" id="SSF46689">
    <property type="entry name" value="Homeodomain-like"/>
    <property type="match status" value="1"/>
</dbReference>
<comment type="function">
    <text evidence="1">Activates ribosomal RNA transcription. Plays a direct role in upstream activation of rRNA promoters.</text>
</comment>
<comment type="subunit">
    <text evidence="1">Homodimer.</text>
</comment>
<comment type="similarity">
    <text evidence="1">Belongs to the transcriptional regulatory Fis family.</text>
</comment>
<accession>P64129</accession>
<accession>Q9KV67</accession>
<gene>
    <name evidence="1" type="primary">fis</name>
    <name type="ordered locus">VV1_1231</name>
</gene>
<organism>
    <name type="scientific">Vibrio vulnificus (strain CMCP6)</name>
    <dbReference type="NCBI Taxonomy" id="216895"/>
    <lineage>
        <taxon>Bacteria</taxon>
        <taxon>Pseudomonadati</taxon>
        <taxon>Pseudomonadota</taxon>
        <taxon>Gammaproteobacteria</taxon>
        <taxon>Vibrionales</taxon>
        <taxon>Vibrionaceae</taxon>
        <taxon>Vibrio</taxon>
    </lineage>
</organism>
<protein>
    <recommendedName>
        <fullName evidence="1">DNA-binding protein Fis</fullName>
    </recommendedName>
</protein>
<proteinExistence type="inferred from homology"/>
<feature type="chain" id="PRO_0000203901" description="DNA-binding protein Fis">
    <location>
        <begin position="1"/>
        <end position="98"/>
    </location>
</feature>
<feature type="DNA-binding region" description="H-T-H motif" evidence="1">
    <location>
        <begin position="74"/>
        <end position="93"/>
    </location>
</feature>
<keyword id="KW-0010">Activator</keyword>
<keyword id="KW-0238">DNA-binding</keyword>
<keyword id="KW-0804">Transcription</keyword>
<keyword id="KW-0805">Transcription regulation</keyword>
<name>FIS_VIBVU</name>
<evidence type="ECO:0000255" key="1">
    <source>
        <dbReference type="HAMAP-Rule" id="MF_00166"/>
    </source>
</evidence>
<sequence length="98" mass="11112">MFEQNLTSEALTVTTVTSQDQITQKPLRDSVKASLKNYLAQLNGQEVTELYELVLAEVEQPLLDTIMQYTRGNQTRAATMMGINRGTLRKKLKKYGMN</sequence>